<feature type="chain" id="PRO_0000173202" description="Large ribosomal subunit protein bL31B">
    <location>
        <begin position="1"/>
        <end position="81"/>
    </location>
</feature>
<organism>
    <name type="scientific">Bacillus licheniformis (strain ATCC 14580 / DSM 13 / JCM 2505 / CCUG 7422 / NBRC 12200 / NCIMB 9375 / NCTC 10341 / NRRL NRS-1264 / Gibson 46)</name>
    <dbReference type="NCBI Taxonomy" id="279010"/>
    <lineage>
        <taxon>Bacteria</taxon>
        <taxon>Bacillati</taxon>
        <taxon>Bacillota</taxon>
        <taxon>Bacilli</taxon>
        <taxon>Bacillales</taxon>
        <taxon>Bacillaceae</taxon>
        <taxon>Bacillus</taxon>
    </lineage>
</organism>
<keyword id="KW-1185">Reference proteome</keyword>
<keyword id="KW-0687">Ribonucleoprotein</keyword>
<keyword id="KW-0689">Ribosomal protein</keyword>
<dbReference type="EMBL" id="AE017333">
    <property type="protein sequence ID" value="AAU42074.1"/>
    <property type="molecule type" value="Genomic_DNA"/>
</dbReference>
<dbReference type="EMBL" id="CP000002">
    <property type="protein sequence ID" value="AAU24712.1"/>
    <property type="molecule type" value="Genomic_DNA"/>
</dbReference>
<dbReference type="RefSeq" id="WP_003184624.1">
    <property type="nucleotide sequence ID" value="NC_006322.1"/>
</dbReference>
<dbReference type="SMR" id="Q65FU0"/>
<dbReference type="STRING" id="279010.BL02403"/>
<dbReference type="KEGG" id="bld:BLi03214"/>
<dbReference type="KEGG" id="bli:BL02403"/>
<dbReference type="eggNOG" id="COG0254">
    <property type="taxonomic scope" value="Bacteria"/>
</dbReference>
<dbReference type="HOGENOM" id="CLU_114306_2_2_9"/>
<dbReference type="Proteomes" id="UP000000606">
    <property type="component" value="Chromosome"/>
</dbReference>
<dbReference type="GO" id="GO:1990904">
    <property type="term" value="C:ribonucleoprotein complex"/>
    <property type="evidence" value="ECO:0007669"/>
    <property type="project" value="UniProtKB-KW"/>
</dbReference>
<dbReference type="GO" id="GO:0005840">
    <property type="term" value="C:ribosome"/>
    <property type="evidence" value="ECO:0007669"/>
    <property type="project" value="UniProtKB-KW"/>
</dbReference>
<dbReference type="GO" id="GO:0003735">
    <property type="term" value="F:structural constituent of ribosome"/>
    <property type="evidence" value="ECO:0007669"/>
    <property type="project" value="InterPro"/>
</dbReference>
<dbReference type="GO" id="GO:0006412">
    <property type="term" value="P:translation"/>
    <property type="evidence" value="ECO:0007669"/>
    <property type="project" value="UniProtKB-UniRule"/>
</dbReference>
<dbReference type="Gene3D" id="4.10.830.30">
    <property type="entry name" value="Ribosomal protein L31"/>
    <property type="match status" value="1"/>
</dbReference>
<dbReference type="HAMAP" id="MF_00502">
    <property type="entry name" value="Ribosomal_bL31_2"/>
    <property type="match status" value="1"/>
</dbReference>
<dbReference type="InterPro" id="IPR034704">
    <property type="entry name" value="Ribosomal_bL28/bL31-like_sf"/>
</dbReference>
<dbReference type="InterPro" id="IPR002150">
    <property type="entry name" value="Ribosomal_bL31"/>
</dbReference>
<dbReference type="InterPro" id="IPR027493">
    <property type="entry name" value="Ribosomal_bL31_B"/>
</dbReference>
<dbReference type="InterPro" id="IPR042105">
    <property type="entry name" value="Ribosomal_bL31_sf"/>
</dbReference>
<dbReference type="NCBIfam" id="TIGR00105">
    <property type="entry name" value="L31"/>
    <property type="match status" value="1"/>
</dbReference>
<dbReference type="NCBIfam" id="NF002462">
    <property type="entry name" value="PRK01678.1"/>
    <property type="match status" value="1"/>
</dbReference>
<dbReference type="PANTHER" id="PTHR33280">
    <property type="entry name" value="50S RIBOSOMAL PROTEIN L31, CHLOROPLASTIC"/>
    <property type="match status" value="1"/>
</dbReference>
<dbReference type="PANTHER" id="PTHR33280:SF1">
    <property type="entry name" value="LARGE RIBOSOMAL SUBUNIT PROTEIN BL31C"/>
    <property type="match status" value="1"/>
</dbReference>
<dbReference type="Pfam" id="PF01197">
    <property type="entry name" value="Ribosomal_L31"/>
    <property type="match status" value="1"/>
</dbReference>
<dbReference type="PRINTS" id="PR01249">
    <property type="entry name" value="RIBOSOMALL31"/>
</dbReference>
<dbReference type="SUPFAM" id="SSF143800">
    <property type="entry name" value="L28p-like"/>
    <property type="match status" value="1"/>
</dbReference>
<dbReference type="PROSITE" id="PS01143">
    <property type="entry name" value="RIBOSOMAL_L31"/>
    <property type="match status" value="1"/>
</dbReference>
<name>RL31B_BACLD</name>
<evidence type="ECO:0000255" key="1">
    <source>
        <dbReference type="HAMAP-Rule" id="MF_00502"/>
    </source>
</evidence>
<evidence type="ECO:0000305" key="2"/>
<sequence>MKPNIHPKTYQVIFQDVNSGYRFLSRSTKTSDETAEWEDGKTYPVIKVEVSSDTHPFYTGRQKFNERGGRVEQFKKRFNMD</sequence>
<accession>Q65FU0</accession>
<accession>Q62R98</accession>
<reference key="1">
    <citation type="journal article" date="2004" name="J. Mol. Microbiol. Biotechnol.">
        <title>The complete genome sequence of Bacillus licheniformis DSM13, an organism with great industrial potential.</title>
        <authorList>
            <person name="Veith B."/>
            <person name="Herzberg C."/>
            <person name="Steckel S."/>
            <person name="Feesche J."/>
            <person name="Maurer K.H."/>
            <person name="Ehrenreich P."/>
            <person name="Baeumer S."/>
            <person name="Henne A."/>
            <person name="Liesegang H."/>
            <person name="Merkl R."/>
            <person name="Ehrenreich A."/>
            <person name="Gottschalk G."/>
        </authorList>
    </citation>
    <scope>NUCLEOTIDE SEQUENCE [LARGE SCALE GENOMIC DNA]</scope>
    <source>
        <strain>ATCC 14580 / DSM 13 / JCM 2505 / CCUG 7422 / NBRC 12200 / NCIMB 9375 / NCTC 10341 / NRRL NRS-1264 / Gibson 46</strain>
    </source>
</reference>
<reference key="2">
    <citation type="journal article" date="2004" name="Genome Biol.">
        <title>Complete genome sequence of the industrial bacterium Bacillus licheniformis and comparisons with closely related Bacillus species.</title>
        <authorList>
            <person name="Rey M.W."/>
            <person name="Ramaiya P."/>
            <person name="Nelson B.A."/>
            <person name="Brody-Karpin S.D."/>
            <person name="Zaretsky E.J."/>
            <person name="Tang M."/>
            <person name="Lopez de Leon A."/>
            <person name="Xiang H."/>
            <person name="Gusti V."/>
            <person name="Clausen I.G."/>
            <person name="Olsen P.B."/>
            <person name="Rasmussen M.D."/>
            <person name="Andersen J.T."/>
            <person name="Joergensen P.L."/>
            <person name="Larsen T.S."/>
            <person name="Sorokin A."/>
            <person name="Bolotin A."/>
            <person name="Lapidus A."/>
            <person name="Galleron N."/>
            <person name="Ehrlich S.D."/>
            <person name="Berka R.M."/>
        </authorList>
    </citation>
    <scope>NUCLEOTIDE SEQUENCE [LARGE SCALE GENOMIC DNA]</scope>
    <source>
        <strain>ATCC 14580 / DSM 13 / JCM 2505 / CCUG 7422 / NBRC 12200 / NCIMB 9375 / NCTC 10341 / NRRL NRS-1264 / Gibson 46</strain>
    </source>
</reference>
<gene>
    <name evidence="1" type="primary">rpmE2</name>
    <name type="ordered locus">BLi03214</name>
    <name type="ordered locus">BL02403</name>
</gene>
<comment type="subunit">
    <text evidence="1">Part of the 50S ribosomal subunit.</text>
</comment>
<comment type="similarity">
    <text evidence="1">Belongs to the bacterial ribosomal protein bL31 family. Type B subfamily.</text>
</comment>
<proteinExistence type="inferred from homology"/>
<protein>
    <recommendedName>
        <fullName evidence="1">Large ribosomal subunit protein bL31B</fullName>
    </recommendedName>
    <alternativeName>
        <fullName evidence="2">50S ribosomal protein L31 type B</fullName>
    </alternativeName>
</protein>